<accession>Q63QE9</accession>
<reference key="1">
    <citation type="journal article" date="2004" name="Proc. Natl. Acad. Sci. U.S.A.">
        <title>Genomic plasticity of the causative agent of melioidosis, Burkholderia pseudomallei.</title>
        <authorList>
            <person name="Holden M.T.G."/>
            <person name="Titball R.W."/>
            <person name="Peacock S.J."/>
            <person name="Cerdeno-Tarraga A.-M."/>
            <person name="Atkins T."/>
            <person name="Crossman L.C."/>
            <person name="Pitt T."/>
            <person name="Churcher C."/>
            <person name="Mungall K.L."/>
            <person name="Bentley S.D."/>
            <person name="Sebaihia M."/>
            <person name="Thomson N.R."/>
            <person name="Bason N."/>
            <person name="Beacham I.R."/>
            <person name="Brooks K."/>
            <person name="Brown K.A."/>
            <person name="Brown N.F."/>
            <person name="Challis G.L."/>
            <person name="Cherevach I."/>
            <person name="Chillingworth T."/>
            <person name="Cronin A."/>
            <person name="Crossett B."/>
            <person name="Davis P."/>
            <person name="DeShazer D."/>
            <person name="Feltwell T."/>
            <person name="Fraser A."/>
            <person name="Hance Z."/>
            <person name="Hauser H."/>
            <person name="Holroyd S."/>
            <person name="Jagels K."/>
            <person name="Keith K.E."/>
            <person name="Maddison M."/>
            <person name="Moule S."/>
            <person name="Price C."/>
            <person name="Quail M.A."/>
            <person name="Rabbinowitsch E."/>
            <person name="Rutherford K."/>
            <person name="Sanders M."/>
            <person name="Simmonds M."/>
            <person name="Songsivilai S."/>
            <person name="Stevens K."/>
            <person name="Tumapa S."/>
            <person name="Vesaratchavest M."/>
            <person name="Whitehead S."/>
            <person name="Yeats C."/>
            <person name="Barrell B.G."/>
            <person name="Oyston P.C.F."/>
            <person name="Parkhill J."/>
        </authorList>
    </citation>
    <scope>NUCLEOTIDE SEQUENCE [LARGE SCALE GENOMIC DNA]</scope>
    <source>
        <strain>K96243</strain>
    </source>
</reference>
<organism>
    <name type="scientific">Burkholderia pseudomallei (strain K96243)</name>
    <dbReference type="NCBI Taxonomy" id="272560"/>
    <lineage>
        <taxon>Bacteria</taxon>
        <taxon>Pseudomonadati</taxon>
        <taxon>Pseudomonadota</taxon>
        <taxon>Betaproteobacteria</taxon>
        <taxon>Burkholderiales</taxon>
        <taxon>Burkholderiaceae</taxon>
        <taxon>Burkholderia</taxon>
        <taxon>pseudomallei group</taxon>
    </lineage>
</organism>
<comment type="function">
    <text evidence="1">Methylates the class 1 translation termination release factors RF1/PrfA and RF2/PrfB on the glutamine residue of the universally conserved GGQ motif.</text>
</comment>
<comment type="catalytic activity">
    <reaction evidence="1">
        <text>L-glutaminyl-[peptide chain release factor] + S-adenosyl-L-methionine = N(5)-methyl-L-glutaminyl-[peptide chain release factor] + S-adenosyl-L-homocysteine + H(+)</text>
        <dbReference type="Rhea" id="RHEA:42896"/>
        <dbReference type="Rhea" id="RHEA-COMP:10271"/>
        <dbReference type="Rhea" id="RHEA-COMP:10272"/>
        <dbReference type="ChEBI" id="CHEBI:15378"/>
        <dbReference type="ChEBI" id="CHEBI:30011"/>
        <dbReference type="ChEBI" id="CHEBI:57856"/>
        <dbReference type="ChEBI" id="CHEBI:59789"/>
        <dbReference type="ChEBI" id="CHEBI:61891"/>
        <dbReference type="EC" id="2.1.1.297"/>
    </reaction>
</comment>
<comment type="similarity">
    <text evidence="1">Belongs to the protein N5-glutamine methyltransferase family. PrmC subfamily.</text>
</comment>
<evidence type="ECO:0000255" key="1">
    <source>
        <dbReference type="HAMAP-Rule" id="MF_02126"/>
    </source>
</evidence>
<sequence>MNTTKPSPATAAELLRASPLDALDARILLAHALGWSRTQLITRADEPLDAAARARYLALQARRAAGEPIAQLTGAREFFGLEFDITPDVLIPRPETELLVETALDAIDGIASPCVLDLGTGSGAIAVSIASERPDARVWALERSVAALDVARRNARKLLDPARAGGPLRFLESDWYAALDPGLRFHVVVSNPPYIARHDPHLAEGDLRFEPRGALTDENDGLAAIRTIVAGAHAFVAPGGALWLEHGYDQAAAVRTLLDAAGFADVESRADLASIERASGGRLPG</sequence>
<proteinExistence type="inferred from homology"/>
<dbReference type="EC" id="2.1.1.297" evidence="1"/>
<dbReference type="EMBL" id="BX571965">
    <property type="protein sequence ID" value="CAH37085.1"/>
    <property type="molecule type" value="Genomic_DNA"/>
</dbReference>
<dbReference type="RefSeq" id="WP_004527812.1">
    <property type="nucleotide sequence ID" value="NC_006350.1"/>
</dbReference>
<dbReference type="RefSeq" id="YP_109669.1">
    <property type="nucleotide sequence ID" value="NC_006350.1"/>
</dbReference>
<dbReference type="SMR" id="Q63QE9"/>
<dbReference type="STRING" id="272560.BPSL3074"/>
<dbReference type="KEGG" id="bps:BPSL3074"/>
<dbReference type="PATRIC" id="fig|272560.51.peg.2180"/>
<dbReference type="eggNOG" id="COG2890">
    <property type="taxonomic scope" value="Bacteria"/>
</dbReference>
<dbReference type="Proteomes" id="UP000000605">
    <property type="component" value="Chromosome 1"/>
</dbReference>
<dbReference type="GO" id="GO:0003676">
    <property type="term" value="F:nucleic acid binding"/>
    <property type="evidence" value="ECO:0007669"/>
    <property type="project" value="InterPro"/>
</dbReference>
<dbReference type="GO" id="GO:0102559">
    <property type="term" value="F:protein-(glutamine-N5) methyltransferase activity"/>
    <property type="evidence" value="ECO:0007669"/>
    <property type="project" value="UniProtKB-EC"/>
</dbReference>
<dbReference type="GO" id="GO:0036009">
    <property type="term" value="F:protein-glutamine N-methyltransferase activity"/>
    <property type="evidence" value="ECO:0007669"/>
    <property type="project" value="UniProtKB-UniRule"/>
</dbReference>
<dbReference type="GO" id="GO:0032259">
    <property type="term" value="P:methylation"/>
    <property type="evidence" value="ECO:0007669"/>
    <property type="project" value="UniProtKB-KW"/>
</dbReference>
<dbReference type="CDD" id="cd02440">
    <property type="entry name" value="AdoMet_MTases"/>
    <property type="match status" value="1"/>
</dbReference>
<dbReference type="FunFam" id="3.40.50.150:FF:000053">
    <property type="entry name" value="Release factor glutamine methyltransferase"/>
    <property type="match status" value="1"/>
</dbReference>
<dbReference type="Gene3D" id="1.10.8.10">
    <property type="entry name" value="DNA helicase RuvA subunit, C-terminal domain"/>
    <property type="match status" value="1"/>
</dbReference>
<dbReference type="Gene3D" id="3.40.50.150">
    <property type="entry name" value="Vaccinia Virus protein VP39"/>
    <property type="match status" value="1"/>
</dbReference>
<dbReference type="HAMAP" id="MF_02126">
    <property type="entry name" value="RF_methyltr_PrmC"/>
    <property type="match status" value="1"/>
</dbReference>
<dbReference type="InterPro" id="IPR002052">
    <property type="entry name" value="DNA_methylase_N6_adenine_CS"/>
</dbReference>
<dbReference type="InterPro" id="IPR004556">
    <property type="entry name" value="HemK-like"/>
</dbReference>
<dbReference type="InterPro" id="IPR050320">
    <property type="entry name" value="N5-glutamine_MTase"/>
</dbReference>
<dbReference type="InterPro" id="IPR040758">
    <property type="entry name" value="PrmC_N"/>
</dbReference>
<dbReference type="InterPro" id="IPR019874">
    <property type="entry name" value="RF_methyltr_PrmC"/>
</dbReference>
<dbReference type="InterPro" id="IPR029063">
    <property type="entry name" value="SAM-dependent_MTases_sf"/>
</dbReference>
<dbReference type="InterPro" id="IPR007848">
    <property type="entry name" value="Small_mtfrase_dom"/>
</dbReference>
<dbReference type="NCBIfam" id="TIGR00536">
    <property type="entry name" value="hemK_fam"/>
    <property type="match status" value="1"/>
</dbReference>
<dbReference type="NCBIfam" id="TIGR03534">
    <property type="entry name" value="RF_mod_PrmC"/>
    <property type="match status" value="1"/>
</dbReference>
<dbReference type="PANTHER" id="PTHR18895">
    <property type="entry name" value="HEMK METHYLTRANSFERASE"/>
    <property type="match status" value="1"/>
</dbReference>
<dbReference type="PANTHER" id="PTHR18895:SF74">
    <property type="entry name" value="MTRF1L RELEASE FACTOR GLUTAMINE METHYLTRANSFERASE"/>
    <property type="match status" value="1"/>
</dbReference>
<dbReference type="Pfam" id="PF05175">
    <property type="entry name" value="MTS"/>
    <property type="match status" value="1"/>
</dbReference>
<dbReference type="Pfam" id="PF17827">
    <property type="entry name" value="PrmC_N"/>
    <property type="match status" value="1"/>
</dbReference>
<dbReference type="SUPFAM" id="SSF53335">
    <property type="entry name" value="S-adenosyl-L-methionine-dependent methyltransferases"/>
    <property type="match status" value="1"/>
</dbReference>
<protein>
    <recommendedName>
        <fullName evidence="1">Release factor glutamine methyltransferase</fullName>
        <shortName evidence="1">RF MTase</shortName>
        <ecNumber evidence="1">2.1.1.297</ecNumber>
    </recommendedName>
    <alternativeName>
        <fullName evidence="1">N5-glutamine methyltransferase PrmC</fullName>
    </alternativeName>
    <alternativeName>
        <fullName evidence="1">Protein-(glutamine-N5) MTase PrmC</fullName>
    </alternativeName>
    <alternativeName>
        <fullName evidence="1">Protein-glutamine N-methyltransferase PrmC</fullName>
    </alternativeName>
</protein>
<feature type="chain" id="PRO_0000414506" description="Release factor glutamine methyltransferase">
    <location>
        <begin position="1"/>
        <end position="285"/>
    </location>
</feature>
<feature type="binding site" evidence="1">
    <location>
        <begin position="119"/>
        <end position="123"/>
    </location>
    <ligand>
        <name>S-adenosyl-L-methionine</name>
        <dbReference type="ChEBI" id="CHEBI:59789"/>
    </ligand>
</feature>
<feature type="binding site" evidence="1">
    <location>
        <position position="142"/>
    </location>
    <ligand>
        <name>S-adenosyl-L-methionine</name>
        <dbReference type="ChEBI" id="CHEBI:59789"/>
    </ligand>
</feature>
<feature type="binding site" evidence="1">
    <location>
        <position position="175"/>
    </location>
    <ligand>
        <name>S-adenosyl-L-methionine</name>
        <dbReference type="ChEBI" id="CHEBI:59789"/>
    </ligand>
</feature>
<feature type="binding site" evidence="1">
    <location>
        <begin position="191"/>
        <end position="194"/>
    </location>
    <ligand>
        <name>substrate</name>
    </ligand>
</feature>
<feature type="binding site" evidence="1">
    <location>
        <position position="191"/>
    </location>
    <ligand>
        <name>S-adenosyl-L-methionine</name>
        <dbReference type="ChEBI" id="CHEBI:59789"/>
    </ligand>
</feature>
<name>PRMC_BURPS</name>
<gene>
    <name evidence="1" type="primary">prmC</name>
    <name type="synonym">hemK</name>
    <name type="ordered locus">BPSL3074</name>
</gene>
<keyword id="KW-0489">Methyltransferase</keyword>
<keyword id="KW-1185">Reference proteome</keyword>
<keyword id="KW-0949">S-adenosyl-L-methionine</keyword>
<keyword id="KW-0808">Transferase</keyword>